<keyword id="KW-0025">Alternative splicing</keyword>
<keyword id="KW-0256">Endoplasmic reticulum</keyword>
<keyword id="KW-0328">Glycosyltransferase</keyword>
<keyword id="KW-0472">Membrane</keyword>
<keyword id="KW-0597">Phosphoprotein</keyword>
<keyword id="KW-1185">Reference proteome</keyword>
<keyword id="KW-0808">Transferase</keyword>
<keyword id="KW-0812">Transmembrane</keyword>
<keyword id="KW-1133">Transmembrane helix</keyword>
<proteinExistence type="evidence at protein level"/>
<protein>
    <recommendedName>
        <fullName>Protein C-mannosyl-transferase DPY19L1</fullName>
        <ecNumber evidence="5">2.4.1.-</ecNumber>
    </recommendedName>
    <alternativeName>
        <fullName>Dpy-19-like protein 1</fullName>
    </alternativeName>
    <alternativeName>
        <fullName>Protein dpy-19 homolog 1</fullName>
    </alternativeName>
</protein>
<sequence>MVLQARSKHRDAAPRPPRSARSSPPPLSGASEVDAGELGSERTPPSPGRRGAAGRKGPRAGTAAPAPDGLAGRLAAGLHWALGLRRGRGRTWSTLLLASFAALLHWSHITHLFENDRHFSHLSTLEREMAFRTEMGLYYSYFKTIVEAPSFLNGVWMIMNDKLTEYPLVINTLKRFNLYPEVILASWYRIYTKIMDLIGIQTKICWTVTRGEGLSPIESCEGLGDPACFYVAVIFMLNGLMMALFFIYGTYLSGSRLGGVVTVLCFFFNHGECTRVMWTPPLRESFSYPFLVLQMLLVTHILRAPELCRGSLIALCISNVLFMLPWQFAQFVLLTQIASLFAVYVVGYIDTHKLQKIIYMHMISLVLCFVLMFGNSMLLTSYYASSLVIIWGMLAMKPQFLRMNVSELSLWVIQGCGWLFGTVILKSVTSRIFGIADDAHIGNLLTSKFFSYKDFDTLLYTCAAEFDFMEKETPLRYTKTLLLPVVLVTVAAIVRKIFNDMRGVVAKQRTHTRKQQFEHGELVYHALQLLAYTALGVLIMRLKLFLTPHMCVMASLICSRQLFGWLFGKVHPGAVVFAILAAMSIQGSANLQTQWNIVGEFSNLPQEELIEWIRYSTKPDAVFAGAMPTMASVKLSALRPVVNHPHYEDAGLRARTKIVYSMYSRKAPEDVKKELMKLKVNYYILEESWCIRRSKPGCSMPEIWDVEDPDNAGKTPLCNILVKDSKPHFTTVFQNSVYKVLEVLRQ</sequence>
<organism>
    <name type="scientific">Mus musculus</name>
    <name type="common">Mouse</name>
    <dbReference type="NCBI Taxonomy" id="10090"/>
    <lineage>
        <taxon>Eukaryota</taxon>
        <taxon>Metazoa</taxon>
        <taxon>Chordata</taxon>
        <taxon>Craniata</taxon>
        <taxon>Vertebrata</taxon>
        <taxon>Euteleostomi</taxon>
        <taxon>Mammalia</taxon>
        <taxon>Eutheria</taxon>
        <taxon>Euarchontoglires</taxon>
        <taxon>Glires</taxon>
        <taxon>Rodentia</taxon>
        <taxon>Myomorpha</taxon>
        <taxon>Muroidea</taxon>
        <taxon>Muridae</taxon>
        <taxon>Murinae</taxon>
        <taxon>Mus</taxon>
        <taxon>Mus</taxon>
    </lineage>
</organism>
<gene>
    <name type="primary">Dpy19l1</name>
</gene>
<accession>A6X919</accession>
<accession>Q3UP31</accession>
<accession>Q8CD79</accession>
<feature type="chain" id="PRO_0000311878" description="Protein C-mannosyl-transferase DPY19L1">
    <location>
        <begin position="1"/>
        <end position="746"/>
    </location>
</feature>
<feature type="transmembrane region" description="Helical" evidence="1">
    <location>
        <begin position="137"/>
        <end position="159"/>
    </location>
</feature>
<feature type="transmembrane region" description="Helical" evidence="1">
    <location>
        <begin position="227"/>
        <end position="247"/>
    </location>
</feature>
<feature type="transmembrane region" description="Helical" evidence="1">
    <location>
        <begin position="257"/>
        <end position="279"/>
    </location>
</feature>
<feature type="transmembrane region" description="Helical" evidence="1">
    <location>
        <begin position="307"/>
        <end position="325"/>
    </location>
</feature>
<feature type="transmembrane region" description="Helical" evidence="1">
    <location>
        <begin position="331"/>
        <end position="350"/>
    </location>
</feature>
<feature type="transmembrane region" description="Helical" evidence="1">
    <location>
        <begin position="357"/>
        <end position="374"/>
    </location>
</feature>
<feature type="transmembrane region" description="Helical" evidence="1">
    <location>
        <begin position="380"/>
        <end position="396"/>
    </location>
</feature>
<feature type="transmembrane region" description="Helical" evidence="1">
    <location>
        <begin position="405"/>
        <end position="425"/>
    </location>
</feature>
<feature type="transmembrane region" description="Helical" evidence="1">
    <location>
        <begin position="481"/>
        <end position="501"/>
    </location>
</feature>
<feature type="transmembrane region" description="Helical" evidence="1">
    <location>
        <begin position="520"/>
        <end position="540"/>
    </location>
</feature>
<feature type="transmembrane region" description="Helical" evidence="1">
    <location>
        <begin position="562"/>
        <end position="582"/>
    </location>
</feature>
<feature type="region of interest" description="Disordered" evidence="2">
    <location>
        <begin position="1"/>
        <end position="68"/>
    </location>
</feature>
<feature type="compositionally biased region" description="Low complexity" evidence="2">
    <location>
        <begin position="59"/>
        <end position="68"/>
    </location>
</feature>
<feature type="modified residue" description="Phosphoserine" evidence="9">
    <location>
        <position position="28"/>
    </location>
</feature>
<feature type="modified residue" description="Phosphoserine" evidence="9">
    <location>
        <position position="31"/>
    </location>
</feature>
<feature type="splice variant" id="VSP_029629" description="In isoform 3." evidence="6 7">
    <location>
        <begin position="1"/>
        <end position="551"/>
    </location>
</feature>
<feature type="splice variant" id="VSP_029630" description="In isoform 2." evidence="7">
    <location>
        <begin position="1"/>
        <end position="194"/>
    </location>
</feature>
<feature type="splice variant" id="VSP_029631" description="In isoform 3." evidence="6 7">
    <original>VMASLICSR</original>
    <variation>MVTRGFLEF</variation>
    <location>
        <begin position="552"/>
        <end position="560"/>
    </location>
</feature>
<feature type="sequence conflict" description="In Ref. 3; CD352443." evidence="8" ref="3">
    <original>V</original>
    <variation>A</variation>
    <location>
        <position position="208"/>
    </location>
</feature>
<dbReference type="EC" id="2.4.1.-" evidence="5"/>
<dbReference type="EMBL" id="AK031291">
    <property type="protein sequence ID" value="BAC27335.1"/>
    <property type="molecule type" value="mRNA"/>
</dbReference>
<dbReference type="EMBL" id="AK143845">
    <property type="protein sequence ID" value="BAE25566.1"/>
    <property type="molecule type" value="mRNA"/>
</dbReference>
<dbReference type="EMBL" id="AC102554">
    <property type="status" value="NOT_ANNOTATED_CDS"/>
    <property type="molecule type" value="Genomic_DNA"/>
</dbReference>
<dbReference type="EMBL" id="CT010514">
    <property type="status" value="NOT_ANNOTATED_CDS"/>
    <property type="molecule type" value="Genomic_DNA"/>
</dbReference>
<dbReference type="EMBL" id="BC116782">
    <property type="protein sequence ID" value="AAI16783.1"/>
    <property type="molecule type" value="mRNA"/>
</dbReference>
<dbReference type="EMBL" id="BC116784">
    <property type="protein sequence ID" value="AAI16785.1"/>
    <property type="molecule type" value="mRNA"/>
</dbReference>
<dbReference type="EMBL" id="CD352443">
    <property type="status" value="NOT_ANNOTATED_CDS"/>
    <property type="molecule type" value="mRNA"/>
</dbReference>
<dbReference type="CCDS" id="CCDS22931.2">
    <molecule id="A6X919-1"/>
</dbReference>
<dbReference type="RefSeq" id="NP_001346877.1">
    <molecule id="A6X919-1"/>
    <property type="nucleotide sequence ID" value="NM_001359948.1"/>
</dbReference>
<dbReference type="RefSeq" id="NP_766508.3">
    <molecule id="A6X919-1"/>
    <property type="nucleotide sequence ID" value="NM_172920.4"/>
</dbReference>
<dbReference type="RefSeq" id="XP_006510359.1">
    <property type="nucleotide sequence ID" value="XM_006510296.3"/>
</dbReference>
<dbReference type="SMR" id="A6X919"/>
<dbReference type="BioGRID" id="232688">
    <property type="interactions" value="1"/>
</dbReference>
<dbReference type="FunCoup" id="A6X919">
    <property type="interactions" value="1172"/>
</dbReference>
<dbReference type="STRING" id="10090.ENSMUSP00000129575"/>
<dbReference type="iPTMnet" id="A6X919"/>
<dbReference type="PhosphoSitePlus" id="A6X919"/>
<dbReference type="SwissPalm" id="A6X919"/>
<dbReference type="jPOST" id="A6X919"/>
<dbReference type="PaxDb" id="10090-ENSMUSP00000129575"/>
<dbReference type="PeptideAtlas" id="A6X919"/>
<dbReference type="ProteomicsDB" id="279869">
    <molecule id="A6X919-1"/>
</dbReference>
<dbReference type="ProteomicsDB" id="279870">
    <molecule id="A6X919-2"/>
</dbReference>
<dbReference type="ProteomicsDB" id="279871">
    <molecule id="A6X919-3"/>
</dbReference>
<dbReference type="Pumba" id="A6X919"/>
<dbReference type="Antibodypedia" id="53188">
    <property type="antibodies" value="145 antibodies from 18 providers"/>
</dbReference>
<dbReference type="Ensembl" id="ENSMUST00000115277.9">
    <molecule id="A6X919-2"/>
    <property type="protein sequence ID" value="ENSMUSP00000110932.3"/>
    <property type="gene ID" value="ENSMUSG00000043067.16"/>
</dbReference>
<dbReference type="Ensembl" id="ENSMUST00000142064.8">
    <molecule id="A6X919-1"/>
    <property type="protein sequence ID" value="ENSMUSP00000119986.2"/>
    <property type="gene ID" value="ENSMUSG00000043067.16"/>
</dbReference>
<dbReference type="Ensembl" id="ENSMUST00000170356.2">
    <molecule id="A6X919-1"/>
    <property type="protein sequence ID" value="ENSMUSP00000129575.2"/>
    <property type="gene ID" value="ENSMUSG00000043067.16"/>
</dbReference>
<dbReference type="GeneID" id="244745"/>
<dbReference type="KEGG" id="mmu:244745"/>
<dbReference type="UCSC" id="uc009ooz.3">
    <molecule id="A6X919-3"/>
    <property type="organism name" value="mouse"/>
</dbReference>
<dbReference type="UCSC" id="uc009opa.3">
    <molecule id="A6X919-1"/>
    <property type="organism name" value="mouse"/>
</dbReference>
<dbReference type="AGR" id="MGI:1915685"/>
<dbReference type="CTD" id="23333"/>
<dbReference type="MGI" id="MGI:1915685">
    <property type="gene designation" value="Dpy19l1"/>
</dbReference>
<dbReference type="VEuPathDB" id="HostDB:ENSMUSG00000043067"/>
<dbReference type="eggNOG" id="KOG4587">
    <property type="taxonomic scope" value="Eukaryota"/>
</dbReference>
<dbReference type="GeneTree" id="ENSGT00530000063023"/>
<dbReference type="HOGENOM" id="CLU_014404_0_1_1"/>
<dbReference type="InParanoid" id="A6X919"/>
<dbReference type="OMA" id="YDNITEY"/>
<dbReference type="OrthoDB" id="6019623at2759"/>
<dbReference type="PhylomeDB" id="A6X919"/>
<dbReference type="TreeFam" id="TF313376"/>
<dbReference type="BRENDA" id="2.4.1.B72">
    <property type="organism ID" value="3474"/>
</dbReference>
<dbReference type="UniPathway" id="UPA00378"/>
<dbReference type="BioGRID-ORCS" id="244745">
    <property type="hits" value="3 hits in 79 CRISPR screens"/>
</dbReference>
<dbReference type="ChiTaRS" id="Dpy19l1">
    <property type="organism name" value="mouse"/>
</dbReference>
<dbReference type="PRO" id="PR:A6X919"/>
<dbReference type="Proteomes" id="UP000000589">
    <property type="component" value="Chromosome 9"/>
</dbReference>
<dbReference type="RNAct" id="A6X919">
    <property type="molecule type" value="protein"/>
</dbReference>
<dbReference type="Bgee" id="ENSMUSG00000043067">
    <property type="expression patterns" value="Expressed in cortical plate and 239 other cell types or tissues"/>
</dbReference>
<dbReference type="GO" id="GO:0005789">
    <property type="term" value="C:endoplasmic reticulum membrane"/>
    <property type="evidence" value="ECO:0000314"/>
    <property type="project" value="FlyBase"/>
</dbReference>
<dbReference type="GO" id="GO:0000030">
    <property type="term" value="F:mannosyltransferase activity"/>
    <property type="evidence" value="ECO:0000314"/>
    <property type="project" value="FlyBase"/>
</dbReference>
<dbReference type="GO" id="GO:0018103">
    <property type="term" value="P:protein C-linked glycosylation"/>
    <property type="evidence" value="ECO:0000314"/>
    <property type="project" value="FlyBase"/>
</dbReference>
<dbReference type="CDD" id="cd20178">
    <property type="entry name" value="Dpy19L1"/>
    <property type="match status" value="1"/>
</dbReference>
<dbReference type="InterPro" id="IPR018732">
    <property type="entry name" value="Dpy-19/Dpy-19-like"/>
</dbReference>
<dbReference type="InterPro" id="IPR047463">
    <property type="entry name" value="Dpy19L1"/>
</dbReference>
<dbReference type="PANTHER" id="PTHR31488:SF5">
    <property type="entry name" value="C-MANNOSYLTRANSFERASE DPY19L1-RELATED"/>
    <property type="match status" value="1"/>
</dbReference>
<dbReference type="PANTHER" id="PTHR31488">
    <property type="entry name" value="DPY-19-LIKE 1, LIKE (H. SAPIENS)"/>
    <property type="match status" value="1"/>
</dbReference>
<dbReference type="Pfam" id="PF10034">
    <property type="entry name" value="Dpy19"/>
    <property type="match status" value="1"/>
</dbReference>
<evidence type="ECO:0000255" key="1"/>
<evidence type="ECO:0000256" key="2">
    <source>
        <dbReference type="SAM" id="MobiDB-lite"/>
    </source>
</evidence>
<evidence type="ECO:0000269" key="3">
    <source>
    </source>
</evidence>
<evidence type="ECO:0000269" key="4">
    <source>
    </source>
</evidence>
<evidence type="ECO:0000269" key="5">
    <source>
    </source>
</evidence>
<evidence type="ECO:0000303" key="6">
    <source>
    </source>
</evidence>
<evidence type="ECO:0000303" key="7">
    <source>
    </source>
</evidence>
<evidence type="ECO:0000305" key="8"/>
<evidence type="ECO:0007744" key="9">
    <source>
    </source>
</evidence>
<reference key="1">
    <citation type="journal article" date="2005" name="Science">
        <title>The transcriptional landscape of the mammalian genome.</title>
        <authorList>
            <person name="Carninci P."/>
            <person name="Kasukawa T."/>
            <person name="Katayama S."/>
            <person name="Gough J."/>
            <person name="Frith M.C."/>
            <person name="Maeda N."/>
            <person name="Oyama R."/>
            <person name="Ravasi T."/>
            <person name="Lenhard B."/>
            <person name="Wells C."/>
            <person name="Kodzius R."/>
            <person name="Shimokawa K."/>
            <person name="Bajic V.B."/>
            <person name="Brenner S.E."/>
            <person name="Batalov S."/>
            <person name="Forrest A.R."/>
            <person name="Zavolan M."/>
            <person name="Davis M.J."/>
            <person name="Wilming L.G."/>
            <person name="Aidinis V."/>
            <person name="Allen J.E."/>
            <person name="Ambesi-Impiombato A."/>
            <person name="Apweiler R."/>
            <person name="Aturaliya R.N."/>
            <person name="Bailey T.L."/>
            <person name="Bansal M."/>
            <person name="Baxter L."/>
            <person name="Beisel K.W."/>
            <person name="Bersano T."/>
            <person name="Bono H."/>
            <person name="Chalk A.M."/>
            <person name="Chiu K.P."/>
            <person name="Choudhary V."/>
            <person name="Christoffels A."/>
            <person name="Clutterbuck D.R."/>
            <person name="Crowe M.L."/>
            <person name="Dalla E."/>
            <person name="Dalrymple B.P."/>
            <person name="de Bono B."/>
            <person name="Della Gatta G."/>
            <person name="di Bernardo D."/>
            <person name="Down T."/>
            <person name="Engstrom P."/>
            <person name="Fagiolini M."/>
            <person name="Faulkner G."/>
            <person name="Fletcher C.F."/>
            <person name="Fukushima T."/>
            <person name="Furuno M."/>
            <person name="Futaki S."/>
            <person name="Gariboldi M."/>
            <person name="Georgii-Hemming P."/>
            <person name="Gingeras T.R."/>
            <person name="Gojobori T."/>
            <person name="Green R.E."/>
            <person name="Gustincich S."/>
            <person name="Harbers M."/>
            <person name="Hayashi Y."/>
            <person name="Hensch T.K."/>
            <person name="Hirokawa N."/>
            <person name="Hill D."/>
            <person name="Huminiecki L."/>
            <person name="Iacono M."/>
            <person name="Ikeo K."/>
            <person name="Iwama A."/>
            <person name="Ishikawa T."/>
            <person name="Jakt M."/>
            <person name="Kanapin A."/>
            <person name="Katoh M."/>
            <person name="Kawasawa Y."/>
            <person name="Kelso J."/>
            <person name="Kitamura H."/>
            <person name="Kitano H."/>
            <person name="Kollias G."/>
            <person name="Krishnan S.P."/>
            <person name="Kruger A."/>
            <person name="Kummerfeld S.K."/>
            <person name="Kurochkin I.V."/>
            <person name="Lareau L.F."/>
            <person name="Lazarevic D."/>
            <person name="Lipovich L."/>
            <person name="Liu J."/>
            <person name="Liuni S."/>
            <person name="McWilliam S."/>
            <person name="Madan Babu M."/>
            <person name="Madera M."/>
            <person name="Marchionni L."/>
            <person name="Matsuda H."/>
            <person name="Matsuzawa S."/>
            <person name="Miki H."/>
            <person name="Mignone F."/>
            <person name="Miyake S."/>
            <person name="Morris K."/>
            <person name="Mottagui-Tabar S."/>
            <person name="Mulder N."/>
            <person name="Nakano N."/>
            <person name="Nakauchi H."/>
            <person name="Ng P."/>
            <person name="Nilsson R."/>
            <person name="Nishiguchi S."/>
            <person name="Nishikawa S."/>
            <person name="Nori F."/>
            <person name="Ohara O."/>
            <person name="Okazaki Y."/>
            <person name="Orlando V."/>
            <person name="Pang K.C."/>
            <person name="Pavan W.J."/>
            <person name="Pavesi G."/>
            <person name="Pesole G."/>
            <person name="Petrovsky N."/>
            <person name="Piazza S."/>
            <person name="Reed J."/>
            <person name="Reid J.F."/>
            <person name="Ring B.Z."/>
            <person name="Ringwald M."/>
            <person name="Rost B."/>
            <person name="Ruan Y."/>
            <person name="Salzberg S.L."/>
            <person name="Sandelin A."/>
            <person name="Schneider C."/>
            <person name="Schoenbach C."/>
            <person name="Sekiguchi K."/>
            <person name="Semple C.A."/>
            <person name="Seno S."/>
            <person name="Sessa L."/>
            <person name="Sheng Y."/>
            <person name="Shibata Y."/>
            <person name="Shimada H."/>
            <person name="Shimada K."/>
            <person name="Silva D."/>
            <person name="Sinclair B."/>
            <person name="Sperling S."/>
            <person name="Stupka E."/>
            <person name="Sugiura K."/>
            <person name="Sultana R."/>
            <person name="Takenaka Y."/>
            <person name="Taki K."/>
            <person name="Tammoja K."/>
            <person name="Tan S.L."/>
            <person name="Tang S."/>
            <person name="Taylor M.S."/>
            <person name="Tegner J."/>
            <person name="Teichmann S.A."/>
            <person name="Ueda H.R."/>
            <person name="van Nimwegen E."/>
            <person name="Verardo R."/>
            <person name="Wei C.L."/>
            <person name="Yagi K."/>
            <person name="Yamanishi H."/>
            <person name="Zabarovsky E."/>
            <person name="Zhu S."/>
            <person name="Zimmer A."/>
            <person name="Hide W."/>
            <person name="Bult C."/>
            <person name="Grimmond S.M."/>
            <person name="Teasdale R.D."/>
            <person name="Liu E.T."/>
            <person name="Brusic V."/>
            <person name="Quackenbush J."/>
            <person name="Wahlestedt C."/>
            <person name="Mattick J.S."/>
            <person name="Hume D.A."/>
            <person name="Kai C."/>
            <person name="Sasaki D."/>
            <person name="Tomaru Y."/>
            <person name="Fukuda S."/>
            <person name="Kanamori-Katayama M."/>
            <person name="Suzuki M."/>
            <person name="Aoki J."/>
            <person name="Arakawa T."/>
            <person name="Iida J."/>
            <person name="Imamura K."/>
            <person name="Itoh M."/>
            <person name="Kato T."/>
            <person name="Kawaji H."/>
            <person name="Kawagashira N."/>
            <person name="Kawashima T."/>
            <person name="Kojima M."/>
            <person name="Kondo S."/>
            <person name="Konno H."/>
            <person name="Nakano K."/>
            <person name="Ninomiya N."/>
            <person name="Nishio T."/>
            <person name="Okada M."/>
            <person name="Plessy C."/>
            <person name="Shibata K."/>
            <person name="Shiraki T."/>
            <person name="Suzuki S."/>
            <person name="Tagami M."/>
            <person name="Waki K."/>
            <person name="Watahiki A."/>
            <person name="Okamura-Oho Y."/>
            <person name="Suzuki H."/>
            <person name="Kawai J."/>
            <person name="Hayashizaki Y."/>
        </authorList>
    </citation>
    <scope>NUCLEOTIDE SEQUENCE [LARGE SCALE MRNA] (ISOFORMS 2 AND 3)</scope>
    <source>
        <strain>C57BL/6J</strain>
        <tissue>Spleen</tissue>
        <tissue>Testis</tissue>
    </source>
</reference>
<reference key="2">
    <citation type="journal article" date="2009" name="PLoS Biol.">
        <title>Lineage-specific biology revealed by a finished genome assembly of the mouse.</title>
        <authorList>
            <person name="Church D.M."/>
            <person name="Goodstadt L."/>
            <person name="Hillier L.W."/>
            <person name="Zody M.C."/>
            <person name="Goldstein S."/>
            <person name="She X."/>
            <person name="Bult C.J."/>
            <person name="Agarwala R."/>
            <person name="Cherry J.L."/>
            <person name="DiCuccio M."/>
            <person name="Hlavina W."/>
            <person name="Kapustin Y."/>
            <person name="Meric P."/>
            <person name="Maglott D."/>
            <person name="Birtle Z."/>
            <person name="Marques A.C."/>
            <person name="Graves T."/>
            <person name="Zhou S."/>
            <person name="Teague B."/>
            <person name="Potamousis K."/>
            <person name="Churas C."/>
            <person name="Place M."/>
            <person name="Herschleb J."/>
            <person name="Runnheim R."/>
            <person name="Forrest D."/>
            <person name="Amos-Landgraf J."/>
            <person name="Schwartz D.C."/>
            <person name="Cheng Z."/>
            <person name="Lindblad-Toh K."/>
            <person name="Eichler E.E."/>
            <person name="Ponting C.P."/>
        </authorList>
    </citation>
    <scope>NUCLEOTIDE SEQUENCE [LARGE SCALE GENOMIC DNA]</scope>
    <source>
        <strain>C57BL/6J</strain>
    </source>
</reference>
<reference key="3">
    <citation type="journal article" date="2004" name="Genome Res.">
        <title>The status, quality, and expansion of the NIH full-length cDNA project: the Mammalian Gene Collection (MGC).</title>
        <authorList>
            <consortium name="The MGC Project Team"/>
        </authorList>
    </citation>
    <scope>NUCLEOTIDE SEQUENCE [LARGE SCALE MRNA] (ISOFORM 3)</scope>
    <scope>NUCLEOTIDE SEQUENCE [LARGE SCALE MRNA] OF 1-220 (ISOFORM 1)</scope>
    <source>
        <tissue>Brain</tissue>
        <tissue>Testis</tissue>
    </source>
</reference>
<reference key="4">
    <citation type="journal article" date="2010" name="Cell">
        <title>A tissue-specific atlas of mouse protein phosphorylation and expression.</title>
        <authorList>
            <person name="Huttlin E.L."/>
            <person name="Jedrychowski M.P."/>
            <person name="Elias J.E."/>
            <person name="Goswami T."/>
            <person name="Rad R."/>
            <person name="Beausoleil S.A."/>
            <person name="Villen J."/>
            <person name="Haas W."/>
            <person name="Sowa M.E."/>
            <person name="Gygi S.P."/>
        </authorList>
    </citation>
    <scope>PHOSPHORYLATION [LARGE SCALE ANALYSIS] AT SER-28 AND SER-31</scope>
    <scope>IDENTIFICATION BY MASS SPECTROMETRY [LARGE SCALE ANALYSIS]</scope>
    <source>
        <tissue>Brain</tissue>
        <tissue>Brown adipose tissue</tissue>
        <tissue>Heart</tissue>
        <tissue>Kidney</tissue>
        <tissue>Liver</tissue>
        <tissue>Lung</tissue>
        <tissue>Pancreas</tissue>
        <tissue>Spleen</tissue>
        <tissue>Testis</tissue>
    </source>
</reference>
<reference key="5">
    <citation type="journal article" date="2011" name="Development">
        <title>Dpy19l1, a multi-transmembrane protein, regulates the radial migration of glutamatergic neurons in the developing cerebral cortex.</title>
        <authorList>
            <person name="Watanabe K."/>
            <person name="Takebayashi H."/>
            <person name="Bepari A.K."/>
            <person name="Esumi S."/>
            <person name="Yanagawa Y."/>
            <person name="Tamamaki N."/>
        </authorList>
    </citation>
    <scope>FUNCTION</scope>
    <scope>DEVELOPMENTAL STAGE</scope>
</reference>
<reference key="6">
    <citation type="journal article" date="2016" name="PLoS ONE">
        <title>Endoplasmic Reticulum-Localized Transmembrane Protein Dpy19L1 Is Required for Neurite Outgrowth.</title>
        <authorList>
            <person name="Watanabe K."/>
            <person name="Bizen N."/>
            <person name="Sato N."/>
            <person name="Takebayashi H."/>
        </authorList>
    </citation>
    <scope>SUBCELLULAR LOCATION</scope>
    <scope>FUNCTION</scope>
</reference>
<reference key="7">
    <citation type="journal article" date="2017" name="Proc. Natl. Acad. Sci. U.S.A.">
        <title>Distinct C-mannosylation of netrin receptor thrombospondin type 1 repeats by mammalian DPY19L1 and DPY19L3.</title>
        <authorList>
            <person name="Shcherbakova A."/>
            <person name="Tiemann B."/>
            <person name="Buettner F.F."/>
            <person name="Bakker H."/>
        </authorList>
    </citation>
    <scope>FUNCTION</scope>
    <scope>CATALYTIC ACTIVITY</scope>
</reference>
<name>D19L1_MOUSE</name>
<comment type="function">
    <text evidence="4 5">C-mannosyltransferase that mediates the C-mannosylation tryptophan residues on target proteins. The reaction occurs on the luminal side of the endoplasmic reticulum and involves the transfer of a mannose unit from a dolichylphosphate mannose (Dol-P-Man) donor to an acceptor protein containing a WxxW consensus sequence (PubMed:28202721). C-mannosylates the first two tryptophans in the WxxWxxWxxC sequence motif in thrombospondin (TSP) type-1 repeats of UNC5A (PubMed:28202721). Regulates neurite extension during development (PubMed:27959946, PubMed:28202721).</text>
</comment>
<comment type="catalytic activity">
    <reaction evidence="5">
        <text>L-tryptophyl-[protein] + a di-trans,poly-cis-dolichyl beta-D-mannosyl phosphate = C-alpha-D-mannosyl-L-tryptophyl-[protein] + a di-trans,poly-cis-dolichyl phosphate + H(+)</text>
        <dbReference type="Rhea" id="RHEA:77219"/>
        <dbReference type="Rhea" id="RHEA-COMP:15365"/>
        <dbReference type="Rhea" id="RHEA-COMP:18864"/>
        <dbReference type="Rhea" id="RHEA-COMP:19498"/>
        <dbReference type="Rhea" id="RHEA-COMP:19501"/>
        <dbReference type="ChEBI" id="CHEBI:15378"/>
        <dbReference type="ChEBI" id="CHEBI:29954"/>
        <dbReference type="ChEBI" id="CHEBI:57683"/>
        <dbReference type="ChEBI" id="CHEBI:58211"/>
        <dbReference type="ChEBI" id="CHEBI:195646"/>
    </reaction>
    <physiologicalReaction direction="left-to-right" evidence="5">
        <dbReference type="Rhea" id="RHEA:77220"/>
    </physiologicalReaction>
</comment>
<comment type="pathway">
    <text evidence="5">Protein modification; protein glycosylation.</text>
</comment>
<comment type="subcellular location">
    <subcellularLocation>
        <location evidence="4">Endoplasmic reticulum membrane</location>
        <topology evidence="1">Multi-pass membrane protein</topology>
    </subcellularLocation>
</comment>
<comment type="alternative products">
    <event type="alternative splicing"/>
    <isoform>
        <id>A6X919-1</id>
        <name>1</name>
        <sequence type="displayed"/>
    </isoform>
    <isoform>
        <id>A6X919-2</id>
        <name>2</name>
        <sequence type="described" ref="VSP_029630"/>
    </isoform>
    <isoform>
        <id>A6X919-3</id>
        <name>3</name>
        <sequence type="described" ref="VSP_029629 VSP_029631"/>
    </isoform>
</comment>
<comment type="developmental stage">
    <text evidence="3">Highly expressed in glutamatergic neurons of the developing cerebral cortex.</text>
</comment>
<comment type="similarity">
    <text evidence="8">Belongs to the dpy-19 family.</text>
</comment>
<comment type="sequence caution" evidence="8">
    <conflict type="frameshift">
        <sequence resource="EMBL" id="CD352443"/>
    </conflict>
</comment>